<proteinExistence type="inferred from homology"/>
<organism>
    <name type="scientific">Neisseria meningitidis serogroup A / serotype 4A (strain DSM 15465 / Z2491)</name>
    <dbReference type="NCBI Taxonomy" id="122587"/>
    <lineage>
        <taxon>Bacteria</taxon>
        <taxon>Pseudomonadati</taxon>
        <taxon>Pseudomonadota</taxon>
        <taxon>Betaproteobacteria</taxon>
        <taxon>Neisseriales</taxon>
        <taxon>Neisseriaceae</taxon>
        <taxon>Neisseria</taxon>
    </lineage>
</organism>
<keyword id="KW-0687">Ribonucleoprotein</keyword>
<keyword id="KW-0689">Ribosomal protein</keyword>
<evidence type="ECO:0000255" key="1">
    <source>
        <dbReference type="HAMAP-Rule" id="MF_00402"/>
    </source>
</evidence>
<evidence type="ECO:0000305" key="2"/>
<dbReference type="EMBL" id="AL157959">
    <property type="protein sequence ID" value="CAM08038.1"/>
    <property type="molecule type" value="Genomic_DNA"/>
</dbReference>
<dbReference type="PIR" id="H81923">
    <property type="entry name" value="H81923"/>
</dbReference>
<dbReference type="RefSeq" id="WP_002214322.1">
    <property type="nucleotide sequence ID" value="NC_003116.1"/>
</dbReference>
<dbReference type="SMR" id="Q9JVL1"/>
<dbReference type="EnsemblBacteria" id="CAM08038">
    <property type="protein sequence ID" value="CAM08038"/>
    <property type="gene ID" value="NMA0792"/>
</dbReference>
<dbReference type="GeneID" id="93386581"/>
<dbReference type="KEGG" id="nma:NMA0792"/>
<dbReference type="HOGENOM" id="CLU_103507_2_1_4"/>
<dbReference type="Proteomes" id="UP000000626">
    <property type="component" value="Chromosome"/>
</dbReference>
<dbReference type="GO" id="GO:0022625">
    <property type="term" value="C:cytosolic large ribosomal subunit"/>
    <property type="evidence" value="ECO:0007669"/>
    <property type="project" value="TreeGrafter"/>
</dbReference>
<dbReference type="GO" id="GO:0003735">
    <property type="term" value="F:structural constituent of ribosome"/>
    <property type="evidence" value="ECO:0007669"/>
    <property type="project" value="InterPro"/>
</dbReference>
<dbReference type="GO" id="GO:0006412">
    <property type="term" value="P:translation"/>
    <property type="evidence" value="ECO:0007669"/>
    <property type="project" value="UniProtKB-UniRule"/>
</dbReference>
<dbReference type="FunFam" id="2.30.30.790:FF:000001">
    <property type="entry name" value="50S ribosomal protein L19"/>
    <property type="match status" value="1"/>
</dbReference>
<dbReference type="Gene3D" id="2.30.30.790">
    <property type="match status" value="1"/>
</dbReference>
<dbReference type="HAMAP" id="MF_00402">
    <property type="entry name" value="Ribosomal_bL19"/>
    <property type="match status" value="1"/>
</dbReference>
<dbReference type="InterPro" id="IPR001857">
    <property type="entry name" value="Ribosomal_bL19"/>
</dbReference>
<dbReference type="InterPro" id="IPR018257">
    <property type="entry name" value="Ribosomal_bL19_CS"/>
</dbReference>
<dbReference type="InterPro" id="IPR038657">
    <property type="entry name" value="Ribosomal_bL19_sf"/>
</dbReference>
<dbReference type="InterPro" id="IPR008991">
    <property type="entry name" value="Translation_prot_SH3-like_sf"/>
</dbReference>
<dbReference type="NCBIfam" id="TIGR01024">
    <property type="entry name" value="rplS_bact"/>
    <property type="match status" value="1"/>
</dbReference>
<dbReference type="PANTHER" id="PTHR15680:SF9">
    <property type="entry name" value="LARGE RIBOSOMAL SUBUNIT PROTEIN BL19M"/>
    <property type="match status" value="1"/>
</dbReference>
<dbReference type="PANTHER" id="PTHR15680">
    <property type="entry name" value="RIBOSOMAL PROTEIN L19"/>
    <property type="match status" value="1"/>
</dbReference>
<dbReference type="Pfam" id="PF01245">
    <property type="entry name" value="Ribosomal_L19"/>
    <property type="match status" value="1"/>
</dbReference>
<dbReference type="PIRSF" id="PIRSF002191">
    <property type="entry name" value="Ribosomal_L19"/>
    <property type="match status" value="1"/>
</dbReference>
<dbReference type="PRINTS" id="PR00061">
    <property type="entry name" value="RIBOSOMALL19"/>
</dbReference>
<dbReference type="SUPFAM" id="SSF50104">
    <property type="entry name" value="Translation proteins SH3-like domain"/>
    <property type="match status" value="1"/>
</dbReference>
<dbReference type="PROSITE" id="PS01015">
    <property type="entry name" value="RIBOSOMAL_L19"/>
    <property type="match status" value="1"/>
</dbReference>
<gene>
    <name evidence="1" type="primary">rplS</name>
    <name type="ordered locus">NMA0792</name>
</gene>
<sequence length="121" mass="13754">MNLIQQLEQEEIARLNKDIPEFAPGDTVVVSVRVVEGTRSRLQAYEGVVIARRNRGLNSNFIVRKISSGEGVERTFQLYSPTVEKIEVKRRGDVRRAKLYYLRGLTGKAARIKEKLPARKG</sequence>
<protein>
    <recommendedName>
        <fullName evidence="1">Large ribosomal subunit protein bL19</fullName>
    </recommendedName>
    <alternativeName>
        <fullName evidence="2">50S ribosomal protein L19</fullName>
    </alternativeName>
</protein>
<comment type="function">
    <text evidence="1">This protein is located at the 30S-50S ribosomal subunit interface and may play a role in the structure and function of the aminoacyl-tRNA binding site.</text>
</comment>
<comment type="similarity">
    <text evidence="1">Belongs to the bacterial ribosomal protein bL19 family.</text>
</comment>
<feature type="chain" id="PRO_0000163495" description="Large ribosomal subunit protein bL19">
    <location>
        <begin position="1"/>
        <end position="121"/>
    </location>
</feature>
<reference key="1">
    <citation type="journal article" date="2000" name="Nature">
        <title>Complete DNA sequence of a serogroup A strain of Neisseria meningitidis Z2491.</title>
        <authorList>
            <person name="Parkhill J."/>
            <person name="Achtman M."/>
            <person name="James K.D."/>
            <person name="Bentley S.D."/>
            <person name="Churcher C.M."/>
            <person name="Klee S.R."/>
            <person name="Morelli G."/>
            <person name="Basham D."/>
            <person name="Brown D."/>
            <person name="Chillingworth T."/>
            <person name="Davies R.M."/>
            <person name="Davis P."/>
            <person name="Devlin K."/>
            <person name="Feltwell T."/>
            <person name="Hamlin N."/>
            <person name="Holroyd S."/>
            <person name="Jagels K."/>
            <person name="Leather S."/>
            <person name="Moule S."/>
            <person name="Mungall K.L."/>
            <person name="Quail M.A."/>
            <person name="Rajandream M.A."/>
            <person name="Rutherford K.M."/>
            <person name="Simmonds M."/>
            <person name="Skelton J."/>
            <person name="Whitehead S."/>
            <person name="Spratt B.G."/>
            <person name="Barrell B.G."/>
        </authorList>
    </citation>
    <scope>NUCLEOTIDE SEQUENCE [LARGE SCALE GENOMIC DNA]</scope>
    <source>
        <strain>DSM 15465 / Z2491</strain>
    </source>
</reference>
<accession>Q9JVL1</accession>
<accession>A1IQK6</accession>
<name>RL19_NEIMA</name>